<dbReference type="EMBL" id="Y08721">
    <property type="protein sequence ID" value="CAA69971.1"/>
    <property type="molecule type" value="mRNA"/>
</dbReference>
<dbReference type="EMBL" id="Y11768">
    <property type="protein sequence ID" value="CAA72433.1"/>
    <property type="molecule type" value="Genomic_DNA"/>
</dbReference>
<dbReference type="PIR" id="JC5383">
    <property type="entry name" value="N1KF2U"/>
</dbReference>
<dbReference type="PDB" id="1KBA">
    <property type="method" value="X-ray"/>
    <property type="resolution" value="2.30 A"/>
    <property type="chains" value="A/B=22-87"/>
</dbReference>
<dbReference type="PDB" id="2NBT">
    <property type="method" value="NMR"/>
    <property type="chains" value="A/B=22-87"/>
</dbReference>
<dbReference type="PDB" id="7ULR">
    <property type="method" value="X-ray"/>
    <property type="resolution" value="1.80 A"/>
    <property type="chains" value="A/B=22-87"/>
</dbReference>
<dbReference type="PDBsum" id="1KBA"/>
<dbReference type="PDBsum" id="2NBT"/>
<dbReference type="PDBsum" id="7ULR"/>
<dbReference type="BMRB" id="P01398"/>
<dbReference type="SMR" id="P01398"/>
<dbReference type="EvolutionaryTrace" id="P01398"/>
<dbReference type="GO" id="GO:0005576">
    <property type="term" value="C:extracellular region"/>
    <property type="evidence" value="ECO:0007669"/>
    <property type="project" value="UniProtKB-SubCell"/>
</dbReference>
<dbReference type="GO" id="GO:0030550">
    <property type="term" value="F:acetylcholine receptor inhibitor activity"/>
    <property type="evidence" value="ECO:0007669"/>
    <property type="project" value="UniProtKB-KW"/>
</dbReference>
<dbReference type="GO" id="GO:0099106">
    <property type="term" value="F:ion channel regulator activity"/>
    <property type="evidence" value="ECO:0007669"/>
    <property type="project" value="UniProtKB-KW"/>
</dbReference>
<dbReference type="GO" id="GO:0090729">
    <property type="term" value="F:toxin activity"/>
    <property type="evidence" value="ECO:0007669"/>
    <property type="project" value="UniProtKB-KW"/>
</dbReference>
<dbReference type="CDD" id="cd00206">
    <property type="entry name" value="TFP_snake_toxin"/>
    <property type="match status" value="1"/>
</dbReference>
<dbReference type="Gene3D" id="2.10.60.10">
    <property type="entry name" value="CD59"/>
    <property type="match status" value="1"/>
</dbReference>
<dbReference type="InterPro" id="IPR003571">
    <property type="entry name" value="Snake_3FTx"/>
</dbReference>
<dbReference type="InterPro" id="IPR045860">
    <property type="entry name" value="Snake_toxin-like_sf"/>
</dbReference>
<dbReference type="InterPro" id="IPR018354">
    <property type="entry name" value="Snake_toxin_con_site"/>
</dbReference>
<dbReference type="InterPro" id="IPR054131">
    <property type="entry name" value="Toxin_cobra-type"/>
</dbReference>
<dbReference type="Pfam" id="PF21947">
    <property type="entry name" value="Toxin_cobra-type"/>
    <property type="match status" value="1"/>
</dbReference>
<dbReference type="SUPFAM" id="SSF57302">
    <property type="entry name" value="Snake toxin-like"/>
    <property type="match status" value="1"/>
</dbReference>
<dbReference type="PROSITE" id="PS00272">
    <property type="entry name" value="SNAKE_TOXIN"/>
    <property type="match status" value="1"/>
</dbReference>
<proteinExistence type="evidence at protein level"/>
<feature type="signal peptide" evidence="4 5">
    <location>
        <begin position="1"/>
        <end position="21"/>
    </location>
</feature>
<feature type="chain" id="PRO_0000035410" description="Kappa-bungarotoxin">
    <location>
        <begin position="22"/>
        <end position="87"/>
    </location>
</feature>
<feature type="disulfide bond" evidence="2 3 6">
    <location>
        <begin position="24"/>
        <end position="42"/>
    </location>
</feature>
<feature type="disulfide bond" evidence="2 3 6">
    <location>
        <begin position="35"/>
        <end position="63"/>
    </location>
</feature>
<feature type="disulfide bond" evidence="2 3 6">
    <location>
        <begin position="48"/>
        <end position="52"/>
    </location>
</feature>
<feature type="disulfide bond" evidence="2 3 6">
    <location>
        <begin position="67"/>
        <end position="79"/>
    </location>
</feature>
<feature type="disulfide bond" evidence="2 3 6">
    <location>
        <begin position="80"/>
        <end position="85"/>
    </location>
</feature>
<feature type="mutagenesis site" description="Little increase in inhibition of neuronal receptor and 8-fold increase in inhibition of muscle receptor." evidence="7">
    <original>Q</original>
    <variation>W</variation>
    <location>
        <position position="47"/>
    </location>
</feature>
<feature type="mutagenesis site" description="Loss of inhibition of neuronal and muscle receptors." evidence="7">
    <original>R</original>
    <variation>A</variation>
    <location>
        <position position="55"/>
    </location>
</feature>
<feature type="mutagenesis site" description="No important change in inhibition of muscle and neuronal receptors." evidence="7">
    <original>P</original>
    <variation>A</variation>
    <location>
        <position position="57"/>
    </location>
</feature>
<feature type="mutagenesis site" description="13-fold decrease in inhibition of neuronal receptor, and complete loss of activity towards muscle receptor." evidence="7">
    <original>P</original>
    <variation>K</variation>
    <location>
        <position position="57"/>
    </location>
</feature>
<feature type="strand" evidence="15">
    <location>
        <begin position="23"/>
        <end position="26"/>
    </location>
</feature>
<feature type="turn" evidence="15">
    <location>
        <begin position="27"/>
        <end position="30"/>
    </location>
</feature>
<feature type="strand" evidence="15">
    <location>
        <begin position="31"/>
        <end position="34"/>
    </location>
</feature>
<feature type="strand" evidence="14">
    <location>
        <begin position="37"/>
        <end position="39"/>
    </location>
</feature>
<feature type="strand" evidence="15">
    <location>
        <begin position="41"/>
        <end position="47"/>
    </location>
</feature>
<feature type="turn" evidence="15">
    <location>
        <begin position="53"/>
        <end position="55"/>
    </location>
</feature>
<feature type="strand" evidence="15">
    <location>
        <begin position="58"/>
        <end position="66"/>
    </location>
</feature>
<feature type="strand" evidence="15">
    <location>
        <begin position="74"/>
        <end position="80"/>
    </location>
</feature>
<feature type="strand" evidence="14">
    <location>
        <begin position="81"/>
        <end position="84"/>
    </location>
</feature>
<evidence type="ECO:0000250" key="1">
    <source>
        <dbReference type="UniProtKB" id="P15816"/>
    </source>
</evidence>
<evidence type="ECO:0000269" key="2">
    <source>
    </source>
</evidence>
<evidence type="ECO:0000269" key="3">
    <source>
    </source>
</evidence>
<evidence type="ECO:0000269" key="4">
    <source>
    </source>
</evidence>
<evidence type="ECO:0000269" key="5">
    <source>
    </source>
</evidence>
<evidence type="ECO:0000269" key="6">
    <source>
    </source>
</evidence>
<evidence type="ECO:0000269" key="7">
    <source>
    </source>
</evidence>
<evidence type="ECO:0000303" key="8">
    <source>
    </source>
</evidence>
<evidence type="ECO:0000303" key="9">
    <source>
    </source>
</evidence>
<evidence type="ECO:0000303" key="10">
    <source>
    </source>
</evidence>
<evidence type="ECO:0000303" key="11">
    <source>
    </source>
</evidence>
<evidence type="ECO:0000303" key="12">
    <source>
    </source>
</evidence>
<evidence type="ECO:0000305" key="13"/>
<evidence type="ECO:0007829" key="14">
    <source>
        <dbReference type="PDB" id="2NBT"/>
    </source>
</evidence>
<evidence type="ECO:0007829" key="15">
    <source>
        <dbReference type="PDB" id="7ULR"/>
    </source>
</evidence>
<accession>P01398</accession>
<protein>
    <recommendedName>
        <fullName evidence="10 11">Kappa-bungarotoxin</fullName>
        <shortName>Kappa-bgt</shortName>
    </recommendedName>
    <alternativeName>
        <fullName>Kappa-1-bungarotoxin</fullName>
    </alternativeName>
    <alternativeName>
        <fullName>Long neurotoxin 2</fullName>
    </alternativeName>
    <alternativeName>
        <fullName evidence="8">Neuronal bungarotoxin</fullName>
        <shortName evidence="8">nBgt</shortName>
    </alternativeName>
    <alternativeName>
        <fullName evidence="9">Toxin F</fullName>
    </alternativeName>
</protein>
<organism>
    <name type="scientific">Bungarus multicinctus</name>
    <name type="common">Many-banded krait</name>
    <dbReference type="NCBI Taxonomy" id="8616"/>
    <lineage>
        <taxon>Eukaryota</taxon>
        <taxon>Metazoa</taxon>
        <taxon>Chordata</taxon>
        <taxon>Craniata</taxon>
        <taxon>Vertebrata</taxon>
        <taxon>Euteleostomi</taxon>
        <taxon>Lepidosauria</taxon>
        <taxon>Squamata</taxon>
        <taxon>Bifurcata</taxon>
        <taxon>Unidentata</taxon>
        <taxon>Episquamata</taxon>
        <taxon>Toxicofera</taxon>
        <taxon>Serpentes</taxon>
        <taxon>Colubroidea</taxon>
        <taxon>Elapidae</taxon>
        <taxon>Bungarinae</taxon>
        <taxon>Bungarus</taxon>
    </lineage>
</organism>
<comment type="function">
    <text evidence="5 12">Postsynaptic neurotoxin that binds and inhibits neuronal nicotinic acetylcholine receptors (nAChR) with high affinity (IC(50)&lt;100 nM). Is a selective, and slowly reversible antagonist of alpha-3/CHRNA3-containing and some alpha-4/CHRNA4-containing AChRs.</text>
</comment>
<comment type="subunit">
    <text evidence="1 3 6">Homodimer (PubMed:7947721, PubMed:2036359) and heterodimer (By similarity); non-covalently linked.</text>
</comment>
<comment type="subcellular location">
    <subcellularLocation>
        <location evidence="5">Secreted</location>
    </subcellularLocation>
</comment>
<comment type="tissue specificity">
    <text evidence="13">Expressed by the venom gland.</text>
</comment>
<comment type="miscellaneous">
    <text evidence="7">Shows very low activity towards muscle nicotinic acetylcholine receptors (IC=~10 uM).</text>
</comment>
<comment type="similarity">
    <text evidence="13">Belongs to the three-finger toxin family. Long-chain subfamily. Kappa-neurotoxin sub-subfamily.</text>
</comment>
<reference key="1">
    <citation type="journal article" date="1997" name="Biochem. Biophys. Res. Commun.">
        <title>cDNA sequence analysis and expression of kappa-bungarotoxin from Taiwan banded krait.</title>
        <authorList>
            <person name="Chang L.-S."/>
            <person name="Lin J."/>
            <person name="Wu P.-F."/>
            <person name="Chang C.-C."/>
            <person name="Hong E."/>
        </authorList>
    </citation>
    <scope>NUCLEOTIDE SEQUENCE [MRNA]</scope>
    <source>
        <tissue>Venom gland</tissue>
    </source>
</reference>
<reference key="2">
    <citation type="journal article" date="2002" name="Genetica">
        <title>Organization and phylogenetic analysis of kappa-bungarotoxin genes from Bungarus multicinctus (Taiwan banded krait).</title>
        <authorList>
            <person name="Chang L.-S."/>
            <person name="Chung C."/>
            <person name="Lin J."/>
            <person name="Hong E."/>
        </authorList>
    </citation>
    <scope>NUCLEOTIDE SEQUENCE [GENOMIC DNA]</scope>
    <source>
        <tissue>Liver</tissue>
    </source>
</reference>
<reference key="3">
    <citation type="journal article" date="1985" name="Biochemistry">
        <title>Kappa-bungarotoxin: complete amino acid sequence of a neuronal nicotinic receptor probe.</title>
        <authorList>
            <person name="Grant G.A."/>
            <person name="Chiappinelli V.A."/>
        </authorList>
    </citation>
    <scope>PROTEIN SEQUENCE OF 22-87</scope>
    <scope>FUNCTION</scope>
    <scope>SUBCELLULAR LOCATION</scope>
    <source>
        <tissue>Venom</tissue>
    </source>
</reference>
<reference key="4">
    <citation type="journal article" date="1986" name="Brain Res.">
        <title>Amino acid sequence of toxin F, a snake venom toxin that blocks neuronal nicotinic receptors.</title>
        <authorList>
            <person name="Loring R.H."/>
            <person name="Andrews D."/>
            <person name="Lane W."/>
            <person name="Zigmond R.E."/>
        </authorList>
    </citation>
    <scope>PROTEIN SEQUENCE OF 22-87</scope>
    <source>
        <tissue>Venom</tissue>
    </source>
</reference>
<reference key="5">
    <citation type="journal article" date="1996" name="Toxicon">
        <title>Binding of native kappa-neurotoxins and site-directed mutants to nicotinic acetylcholine receptors.</title>
        <authorList>
            <person name="Chiappinelli V.A."/>
            <person name="Weaver W.R."/>
            <person name="McLane K.E."/>
            <person name="Conti-Fine B.M."/>
            <person name="Fiordalisi J.J."/>
            <person name="Grant G.A."/>
        </authorList>
    </citation>
    <scope>FUNCTION</scope>
    <scope>MUTAGENESIS OF GLN-47; ARG-55 AND PRO-57</scope>
</reference>
<reference key="6">
    <citation type="journal article" date="1994" name="Biochemistry">
        <title>Crystal structure of kappa-bungarotoxin at 2.3-A resolution.</title>
        <authorList>
            <person name="Dewan J.C."/>
            <person name="Grant G.A."/>
            <person name="Sacchettini J.C."/>
        </authorList>
    </citation>
    <scope>X-RAY CRYSTALLOGRAPHY (2.3 ANGSTROMS) OF 22-87</scope>
    <scope>DISULFIDE BONDS</scope>
    <scope>SUBUNIT</scope>
</reference>
<reference key="7">
    <citation type="journal article" date="1991" name="Biochemistry">
        <title>Solution structure of neuronal bungarotoxin determined by two-dimensional NMR spectroscopy: sequence-specific assignments, secondary structure, and dimer formation.</title>
        <authorList>
            <person name="Oswald R.E."/>
            <person name="Sutcliffe M.J."/>
            <person name="Bamberger M."/>
            <person name="Loring R.H."/>
            <person name="Braswell E."/>
            <person name="Dobson C.M."/>
        </authorList>
    </citation>
    <scope>STRUCTURE BY NMR OF 22-87</scope>
    <scope>DISULFIDE BONDS</scope>
    <scope>SUBUNIT</scope>
</reference>
<reference key="8">
    <citation type="journal article" date="1992" name="Biochemistry">
        <title>Solution structure of neuronal bungarotoxin determined by two-dimensional NMR spectroscopy: calculation of tertiary structure using systematic homologous model building, dynamical simulated annealing, and restrained molecular dynamics.</title>
        <authorList>
            <person name="Sutcliffe M.J."/>
            <person name="Dobson C.M."/>
            <person name="Oswald R.E."/>
        </authorList>
    </citation>
    <scope>STRUCTURE BY NMR OF 22-87</scope>
    <scope>DISULFIDE BONDS</scope>
</reference>
<sequence>MKTLLLTLVVVTIVCLDLGYTRTCLISPSSTPQTCPNGQDICFLKAQCDKFCSIRGPVIEQGCVATCPQFRSNYRSLLCCTTDNCNH</sequence>
<keyword id="KW-0002">3D-structure</keyword>
<keyword id="KW-0008">Acetylcholine receptor inhibiting toxin</keyword>
<keyword id="KW-0903">Direct protein sequencing</keyword>
<keyword id="KW-1015">Disulfide bond</keyword>
<keyword id="KW-0872">Ion channel impairing toxin</keyword>
<keyword id="KW-0528">Neurotoxin</keyword>
<keyword id="KW-0629">Postsynaptic neurotoxin</keyword>
<keyword id="KW-0964">Secreted</keyword>
<keyword id="KW-0732">Signal</keyword>
<keyword id="KW-0800">Toxin</keyword>
<name>3LKB_BUNMU</name>